<evidence type="ECO:0000255" key="1">
    <source>
        <dbReference type="PROSITE-ProRule" id="PRU00208"/>
    </source>
</evidence>
<evidence type="ECO:0000255" key="2">
    <source>
        <dbReference type="PROSITE-ProRule" id="PRU01024"/>
    </source>
</evidence>
<name>Y1151_LACPL</name>
<keyword id="KW-0489">Methyltransferase</keyword>
<keyword id="KW-1185">Reference proteome</keyword>
<keyword id="KW-0949">S-adenosyl-L-methionine</keyword>
<keyword id="KW-0808">Transferase</keyword>
<comment type="similarity">
    <text evidence="2">Belongs to the class I-like SAM-binding methyltransferase superfamily. RNA M5U methyltransferase family.</text>
</comment>
<reference key="1">
    <citation type="journal article" date="2003" name="Proc. Natl. Acad. Sci. U.S.A.">
        <title>Complete genome sequence of Lactobacillus plantarum WCFS1.</title>
        <authorList>
            <person name="Kleerebezem M."/>
            <person name="Boekhorst J."/>
            <person name="van Kranenburg R."/>
            <person name="Molenaar D."/>
            <person name="Kuipers O.P."/>
            <person name="Leer R."/>
            <person name="Tarchini R."/>
            <person name="Peters S.A."/>
            <person name="Sandbrink H.M."/>
            <person name="Fiers M.W.E.J."/>
            <person name="Stiekema W."/>
            <person name="Klein Lankhorst R.M."/>
            <person name="Bron P.A."/>
            <person name="Hoffer S.M."/>
            <person name="Nierop Groot M.N."/>
            <person name="Kerkhoven R."/>
            <person name="De Vries M."/>
            <person name="Ursing B."/>
            <person name="De Vos W.M."/>
            <person name="Siezen R.J."/>
        </authorList>
    </citation>
    <scope>NUCLEOTIDE SEQUENCE [LARGE SCALE GENOMIC DNA]</scope>
    <source>
        <strain>ATCC BAA-793 / NCIMB 8826 / WCFS1</strain>
    </source>
</reference>
<reference key="2">
    <citation type="journal article" date="2012" name="J. Bacteriol.">
        <title>Complete resequencing and reannotation of the Lactobacillus plantarum WCFS1 genome.</title>
        <authorList>
            <person name="Siezen R.J."/>
            <person name="Francke C."/>
            <person name="Renckens B."/>
            <person name="Boekhorst J."/>
            <person name="Wels M."/>
            <person name="Kleerebezem M."/>
            <person name="van Hijum S.A."/>
        </authorList>
    </citation>
    <scope>NUCLEOTIDE SEQUENCE [LARGE SCALE GENOMIC DNA]</scope>
    <scope>GENOME REANNOTATION</scope>
    <source>
        <strain>ATCC BAA-793 / NCIMB 8826 / WCFS1</strain>
    </source>
</reference>
<organism>
    <name type="scientific">Lactiplantibacillus plantarum (strain ATCC BAA-793 / NCIMB 8826 / WCFS1)</name>
    <name type="common">Lactobacillus plantarum</name>
    <dbReference type="NCBI Taxonomy" id="220668"/>
    <lineage>
        <taxon>Bacteria</taxon>
        <taxon>Bacillati</taxon>
        <taxon>Bacillota</taxon>
        <taxon>Bacilli</taxon>
        <taxon>Lactobacillales</taxon>
        <taxon>Lactobacillaceae</taxon>
        <taxon>Lactiplantibacillus</taxon>
    </lineage>
</organism>
<dbReference type="EC" id="2.1.1.-"/>
<dbReference type="EMBL" id="AL935263">
    <property type="protein sequence ID" value="CCC78541.1"/>
    <property type="molecule type" value="Genomic_DNA"/>
</dbReference>
<dbReference type="RefSeq" id="YP_004889055.1">
    <property type="nucleotide sequence ID" value="NC_004567.2"/>
</dbReference>
<dbReference type="SMR" id="Q88XP4"/>
<dbReference type="STRING" id="220668.lp_1151"/>
<dbReference type="EnsemblBacteria" id="CCC78541">
    <property type="protein sequence ID" value="CCC78541"/>
    <property type="gene ID" value="lp_1151"/>
</dbReference>
<dbReference type="KEGG" id="lpl:lp_1151"/>
<dbReference type="PATRIC" id="fig|220668.9.peg.972"/>
<dbReference type="eggNOG" id="COG2265">
    <property type="taxonomic scope" value="Bacteria"/>
</dbReference>
<dbReference type="HOGENOM" id="CLU_014689_7_0_9"/>
<dbReference type="OrthoDB" id="9804590at2"/>
<dbReference type="PhylomeDB" id="Q88XP4"/>
<dbReference type="Proteomes" id="UP000000432">
    <property type="component" value="Chromosome"/>
</dbReference>
<dbReference type="GO" id="GO:0070041">
    <property type="term" value="F:rRNA (uridine-C5-)-methyltransferase activity"/>
    <property type="evidence" value="ECO:0007669"/>
    <property type="project" value="TreeGrafter"/>
</dbReference>
<dbReference type="GO" id="GO:0070475">
    <property type="term" value="P:rRNA base methylation"/>
    <property type="evidence" value="ECO:0007669"/>
    <property type="project" value="TreeGrafter"/>
</dbReference>
<dbReference type="CDD" id="cd02440">
    <property type="entry name" value="AdoMet_MTases"/>
    <property type="match status" value="1"/>
</dbReference>
<dbReference type="FunFam" id="3.40.50.150:FF:000009">
    <property type="entry name" value="23S rRNA (Uracil(1939)-C(5))-methyltransferase RlmD"/>
    <property type="match status" value="1"/>
</dbReference>
<dbReference type="FunFam" id="2.40.50.140:FF:000097">
    <property type="entry name" value="23S rRNA (uracil(1939)-C(5))-methyltransferase RlmD"/>
    <property type="match status" value="1"/>
</dbReference>
<dbReference type="FunFam" id="2.40.50.1070:FF:000003">
    <property type="entry name" value="23S rRNA (Uracil-5-)-methyltransferase RumA"/>
    <property type="match status" value="1"/>
</dbReference>
<dbReference type="Gene3D" id="2.40.50.1070">
    <property type="match status" value="1"/>
</dbReference>
<dbReference type="Gene3D" id="2.40.50.140">
    <property type="entry name" value="Nucleic acid-binding proteins"/>
    <property type="match status" value="1"/>
</dbReference>
<dbReference type="Gene3D" id="3.40.50.150">
    <property type="entry name" value="Vaccinia Virus protein VP39"/>
    <property type="match status" value="1"/>
</dbReference>
<dbReference type="InterPro" id="IPR030390">
    <property type="entry name" value="MeTrfase_TrmA_AS"/>
</dbReference>
<dbReference type="InterPro" id="IPR030391">
    <property type="entry name" value="MeTrfase_TrmA_CS"/>
</dbReference>
<dbReference type="InterPro" id="IPR012340">
    <property type="entry name" value="NA-bd_OB-fold"/>
</dbReference>
<dbReference type="InterPro" id="IPR029063">
    <property type="entry name" value="SAM-dependent_MTases_sf"/>
</dbReference>
<dbReference type="InterPro" id="IPR002792">
    <property type="entry name" value="TRAM_dom"/>
</dbReference>
<dbReference type="InterPro" id="IPR010280">
    <property type="entry name" value="U5_MeTrfase_fam"/>
</dbReference>
<dbReference type="NCBIfam" id="TIGR00479">
    <property type="entry name" value="rumA"/>
    <property type="match status" value="1"/>
</dbReference>
<dbReference type="PANTHER" id="PTHR11061">
    <property type="entry name" value="RNA M5U METHYLTRANSFERASE"/>
    <property type="match status" value="1"/>
</dbReference>
<dbReference type="PANTHER" id="PTHR11061:SF30">
    <property type="entry name" value="TRNA (URACIL(54)-C(5))-METHYLTRANSFERASE"/>
    <property type="match status" value="1"/>
</dbReference>
<dbReference type="Pfam" id="PF01938">
    <property type="entry name" value="TRAM"/>
    <property type="match status" value="1"/>
</dbReference>
<dbReference type="Pfam" id="PF05958">
    <property type="entry name" value="tRNA_U5-meth_tr"/>
    <property type="match status" value="1"/>
</dbReference>
<dbReference type="SUPFAM" id="SSF50249">
    <property type="entry name" value="Nucleic acid-binding proteins"/>
    <property type="match status" value="1"/>
</dbReference>
<dbReference type="SUPFAM" id="SSF53335">
    <property type="entry name" value="S-adenosyl-L-methionine-dependent methyltransferases"/>
    <property type="match status" value="1"/>
</dbReference>
<dbReference type="PROSITE" id="PS51687">
    <property type="entry name" value="SAM_MT_RNA_M5U"/>
    <property type="match status" value="1"/>
</dbReference>
<dbReference type="PROSITE" id="PS50926">
    <property type="entry name" value="TRAM"/>
    <property type="match status" value="1"/>
</dbReference>
<dbReference type="PROSITE" id="PS01230">
    <property type="entry name" value="TRMA_1"/>
    <property type="match status" value="1"/>
</dbReference>
<dbReference type="PROSITE" id="PS01231">
    <property type="entry name" value="TRMA_2"/>
    <property type="match status" value="1"/>
</dbReference>
<protein>
    <recommendedName>
        <fullName>Uncharacterized RNA methyltransferase lp_1151</fullName>
        <ecNumber>2.1.1.-</ecNumber>
    </recommendedName>
</protein>
<sequence>MKVNLPVHKGEVLDVTIMDLTYQGMGVAKVDNYPIFIENALPEEKITVKVTKTTKNFAFGDVEKINQVSPHRVNPKGRVYRQTGIAPLQHLEYSEQLKFKQHQVAELFAKVHMDDVEVLPTIGMANPTQYRNKAQVPVRQVQGQLTTGFYKKNSHQLMPIEDYYIQDPAIDKAIVVVRDILRKYHEAAYDEFHHSGTIRTIMVRRGYYSHEMMVVIVTRTKHLPMADVVTQEIQAALPEVVSVIQNVNSKKTNVILGPVNNVLAGKATIDDQLLGLTFAISAQSFYQVNPQQTEKLYQLAIDQAGLTGNETVIDAYSGIGTISLTMAQHAKQVYGVEIVPAAIDNARQNADKNGITNATFVLDSAEKAMAKWQADGVKPDVIVVDPPRKGLDADFIKSAGEMAPKRVVYISCNPSTLVRDVQRFAEYGYHISAPVQPVDQFPQTPHIESVTVLEREQ</sequence>
<proteinExistence type="inferred from homology"/>
<feature type="chain" id="PRO_0000161989" description="Uncharacterized RNA methyltransferase lp_1151">
    <location>
        <begin position="1"/>
        <end position="457"/>
    </location>
</feature>
<feature type="domain" description="TRAM" evidence="1">
    <location>
        <begin position="6"/>
        <end position="64"/>
    </location>
</feature>
<feature type="active site" description="Nucleophile" evidence="2">
    <location>
        <position position="412"/>
    </location>
</feature>
<feature type="binding site" evidence="2">
    <location>
        <position position="287"/>
    </location>
    <ligand>
        <name>S-adenosyl-L-methionine</name>
        <dbReference type="ChEBI" id="CHEBI:59789"/>
    </ligand>
</feature>
<feature type="binding site" evidence="2">
    <location>
        <position position="316"/>
    </location>
    <ligand>
        <name>S-adenosyl-L-methionine</name>
        <dbReference type="ChEBI" id="CHEBI:59789"/>
    </ligand>
</feature>
<feature type="binding site" evidence="2">
    <location>
        <position position="337"/>
    </location>
    <ligand>
        <name>S-adenosyl-L-methionine</name>
        <dbReference type="ChEBI" id="CHEBI:59789"/>
    </ligand>
</feature>
<feature type="binding site" evidence="2">
    <location>
        <position position="385"/>
    </location>
    <ligand>
        <name>S-adenosyl-L-methionine</name>
        <dbReference type="ChEBI" id="CHEBI:59789"/>
    </ligand>
</feature>
<accession>Q88XP4</accession>
<accession>F9UMV2</accession>
<gene>
    <name type="ordered locus">lp_1151</name>
</gene>